<reference key="1">
    <citation type="journal article" date="2000" name="Nature">
        <title>Sequence and analysis of chromosome 3 of the plant Arabidopsis thaliana.</title>
        <authorList>
            <person name="Salanoubat M."/>
            <person name="Lemcke K."/>
            <person name="Rieger M."/>
            <person name="Ansorge W."/>
            <person name="Unseld M."/>
            <person name="Fartmann B."/>
            <person name="Valle G."/>
            <person name="Bloecker H."/>
            <person name="Perez-Alonso M."/>
            <person name="Obermaier B."/>
            <person name="Delseny M."/>
            <person name="Boutry M."/>
            <person name="Grivell L.A."/>
            <person name="Mache R."/>
            <person name="Puigdomenech P."/>
            <person name="De Simone V."/>
            <person name="Choisne N."/>
            <person name="Artiguenave F."/>
            <person name="Robert C."/>
            <person name="Brottier P."/>
            <person name="Wincker P."/>
            <person name="Cattolico L."/>
            <person name="Weissenbach J."/>
            <person name="Saurin W."/>
            <person name="Quetier F."/>
            <person name="Schaefer M."/>
            <person name="Mueller-Auer S."/>
            <person name="Gabel C."/>
            <person name="Fuchs M."/>
            <person name="Benes V."/>
            <person name="Wurmbach E."/>
            <person name="Drzonek H."/>
            <person name="Erfle H."/>
            <person name="Jordan N."/>
            <person name="Bangert S."/>
            <person name="Wiedelmann R."/>
            <person name="Kranz H."/>
            <person name="Voss H."/>
            <person name="Holland R."/>
            <person name="Brandt P."/>
            <person name="Nyakatura G."/>
            <person name="Vezzi A."/>
            <person name="D'Angelo M."/>
            <person name="Pallavicini A."/>
            <person name="Toppo S."/>
            <person name="Simionati B."/>
            <person name="Conrad A."/>
            <person name="Hornischer K."/>
            <person name="Kauer G."/>
            <person name="Loehnert T.-H."/>
            <person name="Nordsiek G."/>
            <person name="Reichelt J."/>
            <person name="Scharfe M."/>
            <person name="Schoen O."/>
            <person name="Bargues M."/>
            <person name="Terol J."/>
            <person name="Climent J."/>
            <person name="Navarro P."/>
            <person name="Collado C."/>
            <person name="Perez-Perez A."/>
            <person name="Ottenwaelder B."/>
            <person name="Duchemin D."/>
            <person name="Cooke R."/>
            <person name="Laudie M."/>
            <person name="Berger-Llauro C."/>
            <person name="Purnelle B."/>
            <person name="Masuy D."/>
            <person name="de Haan M."/>
            <person name="Maarse A.C."/>
            <person name="Alcaraz J.-P."/>
            <person name="Cottet A."/>
            <person name="Casacuberta E."/>
            <person name="Monfort A."/>
            <person name="Argiriou A."/>
            <person name="Flores M."/>
            <person name="Liguori R."/>
            <person name="Vitale D."/>
            <person name="Mannhaupt G."/>
            <person name="Haase D."/>
            <person name="Schoof H."/>
            <person name="Rudd S."/>
            <person name="Zaccaria P."/>
            <person name="Mewes H.-W."/>
            <person name="Mayer K.F.X."/>
            <person name="Kaul S."/>
            <person name="Town C.D."/>
            <person name="Koo H.L."/>
            <person name="Tallon L.J."/>
            <person name="Jenkins J."/>
            <person name="Rooney T."/>
            <person name="Rizzo M."/>
            <person name="Walts A."/>
            <person name="Utterback T."/>
            <person name="Fujii C.Y."/>
            <person name="Shea T.P."/>
            <person name="Creasy T.H."/>
            <person name="Haas B."/>
            <person name="Maiti R."/>
            <person name="Wu D."/>
            <person name="Peterson J."/>
            <person name="Van Aken S."/>
            <person name="Pai G."/>
            <person name="Militscher J."/>
            <person name="Sellers P."/>
            <person name="Gill J.E."/>
            <person name="Feldblyum T.V."/>
            <person name="Preuss D."/>
            <person name="Lin X."/>
            <person name="Nierman W.C."/>
            <person name="Salzberg S.L."/>
            <person name="White O."/>
            <person name="Venter J.C."/>
            <person name="Fraser C.M."/>
            <person name="Kaneko T."/>
            <person name="Nakamura Y."/>
            <person name="Sato S."/>
            <person name="Kato T."/>
            <person name="Asamizu E."/>
            <person name="Sasamoto S."/>
            <person name="Kimura T."/>
            <person name="Idesawa K."/>
            <person name="Kawashima K."/>
            <person name="Kishida Y."/>
            <person name="Kiyokawa C."/>
            <person name="Kohara M."/>
            <person name="Matsumoto M."/>
            <person name="Matsuno A."/>
            <person name="Muraki A."/>
            <person name="Nakayama S."/>
            <person name="Nakazaki N."/>
            <person name="Shinpo S."/>
            <person name="Takeuchi C."/>
            <person name="Wada T."/>
            <person name="Watanabe A."/>
            <person name="Yamada M."/>
            <person name="Yasuda M."/>
            <person name="Tabata S."/>
        </authorList>
    </citation>
    <scope>NUCLEOTIDE SEQUENCE [LARGE SCALE GENOMIC DNA]</scope>
    <source>
        <strain>cv. Columbia</strain>
    </source>
</reference>
<reference key="2">
    <citation type="journal article" date="2017" name="Plant J.">
        <title>Araport11: a complete reannotation of the Arabidopsis thaliana reference genome.</title>
        <authorList>
            <person name="Cheng C.Y."/>
            <person name="Krishnakumar V."/>
            <person name="Chan A.P."/>
            <person name="Thibaud-Nissen F."/>
            <person name="Schobel S."/>
            <person name="Town C.D."/>
        </authorList>
    </citation>
    <scope>GENOME REANNOTATION</scope>
    <source>
        <strain>cv. Columbia</strain>
    </source>
</reference>
<reference key="3">
    <citation type="journal article" date="2002" name="Science">
        <title>Functional annotation of a full-length Arabidopsis cDNA collection.</title>
        <authorList>
            <person name="Seki M."/>
            <person name="Narusaka M."/>
            <person name="Kamiya A."/>
            <person name="Ishida J."/>
            <person name="Satou M."/>
            <person name="Sakurai T."/>
            <person name="Nakajima M."/>
            <person name="Enju A."/>
            <person name="Akiyama K."/>
            <person name="Oono Y."/>
            <person name="Muramatsu M."/>
            <person name="Hayashizaki Y."/>
            <person name="Kawai J."/>
            <person name="Carninci P."/>
            <person name="Itoh M."/>
            <person name="Ishii Y."/>
            <person name="Arakawa T."/>
            <person name="Shibata K."/>
            <person name="Shinagawa A."/>
            <person name="Shinozaki K."/>
        </authorList>
    </citation>
    <scope>NUCLEOTIDE SEQUENCE [LARGE SCALE MRNA]</scope>
    <source>
        <strain>cv. Columbia</strain>
    </source>
</reference>
<reference key="4">
    <citation type="journal article" date="2001" name="Trends Plant Sci.">
        <title>The U-box protein family in plants.</title>
        <authorList>
            <person name="Azevedo C."/>
            <person name="Santos-Rosa M.J."/>
            <person name="Shirasu K."/>
        </authorList>
    </citation>
    <scope>GENE FAMILY ORGANIZATION</scope>
    <scope>NOMENCLATURE</scope>
</reference>
<reference key="5">
    <citation type="journal article" date="2004" name="Plant Physiol.">
        <title>A large complement of the predicted Arabidopsis ARM repeat proteins are members of the U-box E3 ubiquitin ligase family.</title>
        <authorList>
            <person name="Mudgil Y."/>
            <person name="Shiu S.-H."/>
            <person name="Stone S.L."/>
            <person name="Salt J.N."/>
            <person name="Goring D.R."/>
        </authorList>
    </citation>
    <scope>GENE FAMILY ORGANIZATION</scope>
</reference>
<accession>Q8GWV5</accession>
<accession>Q9M1S1</accession>
<keyword id="KW-0025">Alternative splicing</keyword>
<keyword id="KW-0175">Coiled coil</keyword>
<keyword id="KW-1185">Reference proteome</keyword>
<keyword id="KW-0677">Repeat</keyword>
<keyword id="KW-0808">Transferase</keyword>
<keyword id="KW-0833">Ubl conjugation pathway</keyword>
<evidence type="ECO:0000250" key="1"/>
<evidence type="ECO:0000255" key="2"/>
<evidence type="ECO:0000256" key="3">
    <source>
        <dbReference type="SAM" id="MobiDB-lite"/>
    </source>
</evidence>
<evidence type="ECO:0000305" key="4"/>
<gene>
    <name type="primary">PUB3</name>
    <name type="ordered locus">At3g54790</name>
    <name type="ORF">T5N23_150</name>
</gene>
<sequence>MDPVPVRCLLNSISRYLHLVACQTIRFNPIQTCIGNMVLLLKLLKPLLDEVVDCKIPSDDCLYKGCEDLDSVVNQAREFLEDWSPKLSKLFGVFQCEVLLGKVQTCSLEISRILLQLSQSSPVTSSVQSVERCVQETESFKQEGTLMELMENALRNQKDDITSLDNNHLESIIQMLGLISNQDLLKESITVEKERIRSQASKSEEDMEQTEQLIELVLCIREHMLKTEFLEVAKGISIPPYFRCPLSTELMLDPVIVASGQTFDRTSIKKWLDNGLAVCPRTRQVLTHQELIPNYTVKAMIASWLEANRINLATNSCHQYDGGDASSMANNMGSQDFNRTESFRFSLRSSSLTSRSSLETGNGFEKLKINVSASLCGESQSKDLEIFELLSPGQSYTHSRSESVCSVVSSVDYVPSVTHETESILGNHQSSSEMSPKKNLESSNNVNHEHSAAKTYECSVHDLDDSGTMTTSHTIKLVEDLKSGSNKVKTAAAAEIRHLTINSIENRVHIGRCGAITPLLSLLYSEEKLTQEHAVTALLNLSISELNKAMIVEVGAIEPLVHVLNTGNDRAKENSAASLFSLSVLQVNRERIGQSNAAIQALVNLLGKGTFRGKKDAASALFNLSITHDNKARIVQAKAVKYLVELLDPDLEMVDKAVALLANLSAVGEGRQAIVREGGIPLLVETVDLGSQRGKENAASVLLQLCLNSPKFCTLVLQEGAIPPLVALSQSGTQRAKEKAQQLLSHFRNQRDARMKKGRS</sequence>
<proteinExistence type="evidence at transcript level"/>
<name>PUB3_ARATH</name>
<dbReference type="EC" id="2.3.2.27"/>
<dbReference type="EMBL" id="AL138650">
    <property type="protein sequence ID" value="CAB77599.1"/>
    <property type="status" value="ALT_SEQ"/>
    <property type="molecule type" value="Genomic_DNA"/>
</dbReference>
<dbReference type="EMBL" id="CP002686">
    <property type="protein sequence ID" value="AEE79287.1"/>
    <property type="molecule type" value="Genomic_DNA"/>
</dbReference>
<dbReference type="EMBL" id="CP002686">
    <property type="protein sequence ID" value="ANM63723.1"/>
    <property type="molecule type" value="Genomic_DNA"/>
</dbReference>
<dbReference type="EMBL" id="AK118613">
    <property type="protein sequence ID" value="BAC43212.1"/>
    <property type="molecule type" value="mRNA"/>
</dbReference>
<dbReference type="PIR" id="T47638">
    <property type="entry name" value="T47638"/>
</dbReference>
<dbReference type="RefSeq" id="NP_001325795.1">
    <molecule id="Q8GWV5-1"/>
    <property type="nucleotide sequence ID" value="NM_001339699.1"/>
</dbReference>
<dbReference type="RefSeq" id="NP_191039.2">
    <molecule id="Q8GWV5-1"/>
    <property type="nucleotide sequence ID" value="NM_115336.5"/>
</dbReference>
<dbReference type="SMR" id="Q8GWV5"/>
<dbReference type="FunCoup" id="Q8GWV5">
    <property type="interactions" value="1237"/>
</dbReference>
<dbReference type="STRING" id="3702.Q8GWV5"/>
<dbReference type="iPTMnet" id="Q8GWV5"/>
<dbReference type="PaxDb" id="3702-AT3G54790.1"/>
<dbReference type="ProteomicsDB" id="226069">
    <molecule id="Q8GWV5-1"/>
</dbReference>
<dbReference type="EnsemblPlants" id="AT3G54790.1">
    <molecule id="Q8GWV5-1"/>
    <property type="protein sequence ID" value="AT3G54790.1"/>
    <property type="gene ID" value="AT3G54790"/>
</dbReference>
<dbReference type="EnsemblPlants" id="AT3G54790.3">
    <molecule id="Q8GWV5-1"/>
    <property type="protein sequence ID" value="AT3G54790.3"/>
    <property type="gene ID" value="AT3G54790"/>
</dbReference>
<dbReference type="GeneID" id="824644"/>
<dbReference type="Gramene" id="AT3G54790.1">
    <molecule id="Q8GWV5-1"/>
    <property type="protein sequence ID" value="AT3G54790.1"/>
    <property type="gene ID" value="AT3G54790"/>
</dbReference>
<dbReference type="Gramene" id="AT3G54790.3">
    <molecule id="Q8GWV5-1"/>
    <property type="protein sequence ID" value="AT3G54790.3"/>
    <property type="gene ID" value="AT3G54790"/>
</dbReference>
<dbReference type="KEGG" id="ath:AT3G54790"/>
<dbReference type="Araport" id="AT3G54790"/>
<dbReference type="TAIR" id="AT3G54790">
    <property type="gene designation" value="PUB3"/>
</dbReference>
<dbReference type="eggNOG" id="KOG0167">
    <property type="taxonomic scope" value="Eukaryota"/>
</dbReference>
<dbReference type="InParanoid" id="Q8GWV5"/>
<dbReference type="OMA" id="PSDETIC"/>
<dbReference type="OrthoDB" id="7537227at2759"/>
<dbReference type="PhylomeDB" id="Q8GWV5"/>
<dbReference type="UniPathway" id="UPA00143"/>
<dbReference type="PRO" id="PR:Q8GWV5"/>
<dbReference type="Proteomes" id="UP000006548">
    <property type="component" value="Chromosome 3"/>
</dbReference>
<dbReference type="ExpressionAtlas" id="Q8GWV5">
    <property type="expression patterns" value="baseline and differential"/>
</dbReference>
<dbReference type="GO" id="GO:0004842">
    <property type="term" value="F:ubiquitin-protein transferase activity"/>
    <property type="evidence" value="ECO:0007669"/>
    <property type="project" value="InterPro"/>
</dbReference>
<dbReference type="GO" id="GO:0016567">
    <property type="term" value="P:protein ubiquitination"/>
    <property type="evidence" value="ECO:0007669"/>
    <property type="project" value="UniProtKB-UniPathway"/>
</dbReference>
<dbReference type="CDD" id="cd16664">
    <property type="entry name" value="RING-Ubox_PUB"/>
    <property type="match status" value="1"/>
</dbReference>
<dbReference type="FunFam" id="1.25.10.10:FF:000082">
    <property type="entry name" value="RING-type E3 ubiquitin transferase"/>
    <property type="match status" value="1"/>
</dbReference>
<dbReference type="FunFam" id="3.30.40.10:FF:000292">
    <property type="entry name" value="RING-type E3 ubiquitin transferase"/>
    <property type="match status" value="1"/>
</dbReference>
<dbReference type="Gene3D" id="1.25.10.10">
    <property type="entry name" value="Leucine-rich Repeat Variant"/>
    <property type="match status" value="2"/>
</dbReference>
<dbReference type="Gene3D" id="3.30.40.10">
    <property type="entry name" value="Zinc/RING finger domain, C3HC4 (zinc finger)"/>
    <property type="match status" value="1"/>
</dbReference>
<dbReference type="InterPro" id="IPR011989">
    <property type="entry name" value="ARM-like"/>
</dbReference>
<dbReference type="InterPro" id="IPR016024">
    <property type="entry name" value="ARM-type_fold"/>
</dbReference>
<dbReference type="InterPro" id="IPR000225">
    <property type="entry name" value="Armadillo"/>
</dbReference>
<dbReference type="InterPro" id="IPR045210">
    <property type="entry name" value="RING-Ubox_PUB"/>
</dbReference>
<dbReference type="InterPro" id="IPR003613">
    <property type="entry name" value="Ubox_domain"/>
</dbReference>
<dbReference type="InterPro" id="IPR013083">
    <property type="entry name" value="Znf_RING/FYVE/PHD"/>
</dbReference>
<dbReference type="PANTHER" id="PTHR23315">
    <property type="entry name" value="U BOX DOMAIN-CONTAINING"/>
    <property type="match status" value="1"/>
</dbReference>
<dbReference type="PANTHER" id="PTHR23315:SF278">
    <property type="entry name" value="U-BOX DOMAIN-CONTAINING PROTEIN 3"/>
    <property type="match status" value="1"/>
</dbReference>
<dbReference type="Pfam" id="PF00514">
    <property type="entry name" value="Arm"/>
    <property type="match status" value="2"/>
</dbReference>
<dbReference type="Pfam" id="PF25240">
    <property type="entry name" value="PUB2_N"/>
    <property type="match status" value="1"/>
</dbReference>
<dbReference type="Pfam" id="PF04564">
    <property type="entry name" value="U-box"/>
    <property type="match status" value="1"/>
</dbReference>
<dbReference type="SMART" id="SM00185">
    <property type="entry name" value="ARM"/>
    <property type="match status" value="5"/>
</dbReference>
<dbReference type="SMART" id="SM00504">
    <property type="entry name" value="Ubox"/>
    <property type="match status" value="1"/>
</dbReference>
<dbReference type="SUPFAM" id="SSF48371">
    <property type="entry name" value="ARM repeat"/>
    <property type="match status" value="1"/>
</dbReference>
<dbReference type="SUPFAM" id="SSF57850">
    <property type="entry name" value="RING/U-box"/>
    <property type="match status" value="1"/>
</dbReference>
<dbReference type="PROSITE" id="PS50176">
    <property type="entry name" value="ARM_REPEAT"/>
    <property type="match status" value="3"/>
</dbReference>
<dbReference type="PROSITE" id="PS51698">
    <property type="entry name" value="U_BOX"/>
    <property type="match status" value="1"/>
</dbReference>
<comment type="function">
    <text evidence="1">Functions as an E3 ubiquitin ligase.</text>
</comment>
<comment type="catalytic activity">
    <reaction>
        <text>S-ubiquitinyl-[E2 ubiquitin-conjugating enzyme]-L-cysteine + [acceptor protein]-L-lysine = [E2 ubiquitin-conjugating enzyme]-L-cysteine + N(6)-ubiquitinyl-[acceptor protein]-L-lysine.</text>
        <dbReference type="EC" id="2.3.2.27"/>
    </reaction>
</comment>
<comment type="pathway">
    <text>Protein modification; protein ubiquitination.</text>
</comment>
<comment type="alternative products">
    <event type="alternative splicing"/>
    <isoform>
        <id>Q8GWV5-1</id>
        <name>1</name>
        <sequence type="displayed"/>
    </isoform>
    <text>A number of isoforms are produced. According to EST sequences.</text>
</comment>
<comment type="sequence caution" evidence="4">
    <conflict type="erroneous gene model prediction">
        <sequence resource="EMBL-CDS" id="CAB77599"/>
    </conflict>
</comment>
<protein>
    <recommendedName>
        <fullName>U-box domain-containing protein 3</fullName>
        <ecNumber>2.3.2.27</ecNumber>
    </recommendedName>
    <alternativeName>
        <fullName>Plant U-box protein 3</fullName>
    </alternativeName>
    <alternativeName>
        <fullName evidence="4">RING-type E3 ubiquitin transferase PUB3</fullName>
    </alternativeName>
</protein>
<organism>
    <name type="scientific">Arabidopsis thaliana</name>
    <name type="common">Mouse-ear cress</name>
    <dbReference type="NCBI Taxonomy" id="3702"/>
    <lineage>
        <taxon>Eukaryota</taxon>
        <taxon>Viridiplantae</taxon>
        <taxon>Streptophyta</taxon>
        <taxon>Embryophyta</taxon>
        <taxon>Tracheophyta</taxon>
        <taxon>Spermatophyta</taxon>
        <taxon>Magnoliopsida</taxon>
        <taxon>eudicotyledons</taxon>
        <taxon>Gunneridae</taxon>
        <taxon>Pentapetalae</taxon>
        <taxon>rosids</taxon>
        <taxon>malvids</taxon>
        <taxon>Brassicales</taxon>
        <taxon>Brassicaceae</taxon>
        <taxon>Camelineae</taxon>
        <taxon>Arabidopsis</taxon>
    </lineage>
</organism>
<feature type="chain" id="PRO_0000322149" description="U-box domain-containing protein 3">
    <location>
        <begin position="1"/>
        <end position="760"/>
    </location>
</feature>
<feature type="domain" description="U-box">
    <location>
        <begin position="237"/>
        <end position="311"/>
    </location>
</feature>
<feature type="repeat" description="ARM 1">
    <location>
        <begin position="504"/>
        <end position="543"/>
    </location>
</feature>
<feature type="repeat" description="ARM 2">
    <location>
        <begin position="545"/>
        <end position="584"/>
    </location>
</feature>
<feature type="repeat" description="ARM 3">
    <location>
        <begin position="586"/>
        <end position="626"/>
    </location>
</feature>
<feature type="repeat" description="ARM 4">
    <location>
        <begin position="628"/>
        <end position="666"/>
    </location>
</feature>
<feature type="repeat" description="ARM 5">
    <location>
        <begin position="668"/>
        <end position="707"/>
    </location>
</feature>
<feature type="region of interest" description="Disordered" evidence="3">
    <location>
        <begin position="424"/>
        <end position="448"/>
    </location>
</feature>
<feature type="coiled-coil region" evidence="2">
    <location>
        <begin position="146"/>
        <end position="217"/>
    </location>
</feature>
<feature type="compositionally biased region" description="Polar residues" evidence="3">
    <location>
        <begin position="424"/>
        <end position="434"/>
    </location>
</feature>
<feature type="sequence conflict" description="In Ref. 3; BAC43212." evidence="4" ref="3">
    <original>C</original>
    <variation>R</variation>
    <location>
        <position position="66"/>
    </location>
</feature>
<feature type="sequence conflict" description="In Ref. 3; BAC43212." evidence="4" ref="3">
    <original>I</original>
    <variation>V</variation>
    <location>
        <position position="557"/>
    </location>
</feature>